<feature type="chain" id="PRO_0000241277" description="Aspartyl/glutamyl-tRNA(Asn/Gln) amidotransferase subunit B">
    <location>
        <begin position="1"/>
        <end position="475"/>
    </location>
</feature>
<comment type="function">
    <text evidence="1">Allows the formation of correctly charged Asn-tRNA(Asn) or Gln-tRNA(Gln) through the transamidation of misacylated Asp-tRNA(Asn) or Glu-tRNA(Gln) in organisms which lack either or both of asparaginyl-tRNA or glutaminyl-tRNA synthetases. The reaction takes place in the presence of glutamine and ATP through an activated phospho-Asp-tRNA(Asn) or phospho-Glu-tRNA(Gln).</text>
</comment>
<comment type="catalytic activity">
    <reaction evidence="1">
        <text>L-glutamyl-tRNA(Gln) + L-glutamine + ATP + H2O = L-glutaminyl-tRNA(Gln) + L-glutamate + ADP + phosphate + H(+)</text>
        <dbReference type="Rhea" id="RHEA:17521"/>
        <dbReference type="Rhea" id="RHEA-COMP:9681"/>
        <dbReference type="Rhea" id="RHEA-COMP:9684"/>
        <dbReference type="ChEBI" id="CHEBI:15377"/>
        <dbReference type="ChEBI" id="CHEBI:15378"/>
        <dbReference type="ChEBI" id="CHEBI:29985"/>
        <dbReference type="ChEBI" id="CHEBI:30616"/>
        <dbReference type="ChEBI" id="CHEBI:43474"/>
        <dbReference type="ChEBI" id="CHEBI:58359"/>
        <dbReference type="ChEBI" id="CHEBI:78520"/>
        <dbReference type="ChEBI" id="CHEBI:78521"/>
        <dbReference type="ChEBI" id="CHEBI:456216"/>
    </reaction>
</comment>
<comment type="catalytic activity">
    <reaction evidence="1">
        <text>L-aspartyl-tRNA(Asn) + L-glutamine + ATP + H2O = L-asparaginyl-tRNA(Asn) + L-glutamate + ADP + phosphate + 2 H(+)</text>
        <dbReference type="Rhea" id="RHEA:14513"/>
        <dbReference type="Rhea" id="RHEA-COMP:9674"/>
        <dbReference type="Rhea" id="RHEA-COMP:9677"/>
        <dbReference type="ChEBI" id="CHEBI:15377"/>
        <dbReference type="ChEBI" id="CHEBI:15378"/>
        <dbReference type="ChEBI" id="CHEBI:29985"/>
        <dbReference type="ChEBI" id="CHEBI:30616"/>
        <dbReference type="ChEBI" id="CHEBI:43474"/>
        <dbReference type="ChEBI" id="CHEBI:58359"/>
        <dbReference type="ChEBI" id="CHEBI:78515"/>
        <dbReference type="ChEBI" id="CHEBI:78516"/>
        <dbReference type="ChEBI" id="CHEBI:456216"/>
    </reaction>
</comment>
<comment type="subunit">
    <text evidence="1">Heterotrimer of A, B and C subunits.</text>
</comment>
<comment type="similarity">
    <text evidence="1">Belongs to the GatB/GatE family. GatB subfamily.</text>
</comment>
<keyword id="KW-0067">ATP-binding</keyword>
<keyword id="KW-0436">Ligase</keyword>
<keyword id="KW-0547">Nucleotide-binding</keyword>
<keyword id="KW-0648">Protein biosynthesis</keyword>
<proteinExistence type="inferred from homology"/>
<dbReference type="EC" id="6.3.5.-" evidence="1"/>
<dbReference type="EMBL" id="CP000255">
    <property type="protein sequence ID" value="ABD22860.1"/>
    <property type="molecule type" value="Genomic_DNA"/>
</dbReference>
<dbReference type="RefSeq" id="WP_000545370.1">
    <property type="nucleotide sequence ID" value="NZ_CP027476.1"/>
</dbReference>
<dbReference type="SMR" id="Q2FFJ6"/>
<dbReference type="KEGG" id="saa:SAUSA300_1880"/>
<dbReference type="HOGENOM" id="CLU_019240_0_0_9"/>
<dbReference type="OMA" id="ARKWWMG"/>
<dbReference type="Proteomes" id="UP000001939">
    <property type="component" value="Chromosome"/>
</dbReference>
<dbReference type="GO" id="GO:0050566">
    <property type="term" value="F:asparaginyl-tRNA synthase (glutamine-hydrolyzing) activity"/>
    <property type="evidence" value="ECO:0007669"/>
    <property type="project" value="RHEA"/>
</dbReference>
<dbReference type="GO" id="GO:0005524">
    <property type="term" value="F:ATP binding"/>
    <property type="evidence" value="ECO:0007669"/>
    <property type="project" value="UniProtKB-KW"/>
</dbReference>
<dbReference type="GO" id="GO:0050567">
    <property type="term" value="F:glutaminyl-tRNA synthase (glutamine-hydrolyzing) activity"/>
    <property type="evidence" value="ECO:0007669"/>
    <property type="project" value="UniProtKB-UniRule"/>
</dbReference>
<dbReference type="GO" id="GO:0070681">
    <property type="term" value="P:glutaminyl-tRNAGln biosynthesis via transamidation"/>
    <property type="evidence" value="ECO:0007669"/>
    <property type="project" value="TreeGrafter"/>
</dbReference>
<dbReference type="GO" id="GO:0006412">
    <property type="term" value="P:translation"/>
    <property type="evidence" value="ECO:0007669"/>
    <property type="project" value="UniProtKB-UniRule"/>
</dbReference>
<dbReference type="FunFam" id="1.10.10.410:FF:000001">
    <property type="entry name" value="Aspartyl/glutamyl-tRNA(Asn/Gln) amidotransferase subunit B"/>
    <property type="match status" value="1"/>
</dbReference>
<dbReference type="FunFam" id="1.10.150.380:FF:000001">
    <property type="entry name" value="Aspartyl/glutamyl-tRNA(Asn/Gln) amidotransferase subunit B"/>
    <property type="match status" value="1"/>
</dbReference>
<dbReference type="Gene3D" id="1.10.10.410">
    <property type="match status" value="1"/>
</dbReference>
<dbReference type="Gene3D" id="1.10.150.380">
    <property type="entry name" value="GatB domain, N-terminal subdomain"/>
    <property type="match status" value="1"/>
</dbReference>
<dbReference type="HAMAP" id="MF_00121">
    <property type="entry name" value="GatB"/>
    <property type="match status" value="1"/>
</dbReference>
<dbReference type="InterPro" id="IPR017959">
    <property type="entry name" value="Asn/Gln-tRNA_amidoTrfase_suB/E"/>
</dbReference>
<dbReference type="InterPro" id="IPR006075">
    <property type="entry name" value="Asn/Gln-tRNA_Trfase_suB/E_cat"/>
</dbReference>
<dbReference type="InterPro" id="IPR018027">
    <property type="entry name" value="Asn/Gln_amidotransferase"/>
</dbReference>
<dbReference type="InterPro" id="IPR003789">
    <property type="entry name" value="Asn/Gln_tRNA_amidoTrase-B-like"/>
</dbReference>
<dbReference type="InterPro" id="IPR004413">
    <property type="entry name" value="GatB"/>
</dbReference>
<dbReference type="InterPro" id="IPR042114">
    <property type="entry name" value="GatB_C_1"/>
</dbReference>
<dbReference type="InterPro" id="IPR023168">
    <property type="entry name" value="GatB_Yqey_C_2"/>
</dbReference>
<dbReference type="InterPro" id="IPR017958">
    <property type="entry name" value="Gln-tRNA_amidoTrfase_suB_CS"/>
</dbReference>
<dbReference type="InterPro" id="IPR014746">
    <property type="entry name" value="Gln_synth/guanido_kin_cat_dom"/>
</dbReference>
<dbReference type="NCBIfam" id="TIGR00133">
    <property type="entry name" value="gatB"/>
    <property type="match status" value="1"/>
</dbReference>
<dbReference type="NCBIfam" id="NF004011">
    <property type="entry name" value="PRK05477.1-1"/>
    <property type="match status" value="1"/>
</dbReference>
<dbReference type="NCBIfam" id="NF004012">
    <property type="entry name" value="PRK05477.1-2"/>
    <property type="match status" value="1"/>
</dbReference>
<dbReference type="NCBIfam" id="NF004014">
    <property type="entry name" value="PRK05477.1-4"/>
    <property type="match status" value="1"/>
</dbReference>
<dbReference type="PANTHER" id="PTHR11659">
    <property type="entry name" value="GLUTAMYL-TRNA GLN AMIDOTRANSFERASE SUBUNIT B MITOCHONDRIAL AND PROKARYOTIC PET112-RELATED"/>
    <property type="match status" value="1"/>
</dbReference>
<dbReference type="PANTHER" id="PTHR11659:SF0">
    <property type="entry name" value="GLUTAMYL-TRNA(GLN) AMIDOTRANSFERASE SUBUNIT B, MITOCHONDRIAL"/>
    <property type="match status" value="1"/>
</dbReference>
<dbReference type="Pfam" id="PF02934">
    <property type="entry name" value="GatB_N"/>
    <property type="match status" value="1"/>
</dbReference>
<dbReference type="Pfam" id="PF02637">
    <property type="entry name" value="GatB_Yqey"/>
    <property type="match status" value="1"/>
</dbReference>
<dbReference type="SMART" id="SM00845">
    <property type="entry name" value="GatB_Yqey"/>
    <property type="match status" value="1"/>
</dbReference>
<dbReference type="SUPFAM" id="SSF89095">
    <property type="entry name" value="GatB/YqeY motif"/>
    <property type="match status" value="1"/>
</dbReference>
<dbReference type="SUPFAM" id="SSF55931">
    <property type="entry name" value="Glutamine synthetase/guanido kinase"/>
    <property type="match status" value="1"/>
</dbReference>
<dbReference type="PROSITE" id="PS01234">
    <property type="entry name" value="GATB"/>
    <property type="match status" value="1"/>
</dbReference>
<gene>
    <name evidence="1" type="primary">gatB</name>
    <name type="ordered locus">SAUSA300_1880</name>
</gene>
<name>GATB_STAA3</name>
<evidence type="ECO:0000255" key="1">
    <source>
        <dbReference type="HAMAP-Rule" id="MF_00121"/>
    </source>
</evidence>
<protein>
    <recommendedName>
        <fullName evidence="1">Aspartyl/glutamyl-tRNA(Asn/Gln) amidotransferase subunit B</fullName>
        <shortName evidence="1">Asp/Glu-ADT subunit B</shortName>
        <ecNumber evidence="1">6.3.5.-</ecNumber>
    </recommendedName>
</protein>
<reference key="1">
    <citation type="journal article" date="2006" name="Lancet">
        <title>Complete genome sequence of USA300, an epidemic clone of community-acquired meticillin-resistant Staphylococcus aureus.</title>
        <authorList>
            <person name="Diep B.A."/>
            <person name="Gill S.R."/>
            <person name="Chang R.F."/>
            <person name="Phan T.H."/>
            <person name="Chen J.H."/>
            <person name="Davidson M.G."/>
            <person name="Lin F."/>
            <person name="Lin J."/>
            <person name="Carleton H.A."/>
            <person name="Mongodin E.F."/>
            <person name="Sensabaugh G.F."/>
            <person name="Perdreau-Remington F."/>
        </authorList>
    </citation>
    <scope>NUCLEOTIDE SEQUENCE [LARGE SCALE GENOMIC DNA]</scope>
    <source>
        <strain>USA300</strain>
    </source>
</reference>
<sequence length="475" mass="53657">MHFETVIGLEVHVELKTDSKMFSPSPAHFGAEPNSNTNVIDLAYPGVLPVVNKRAVDWAMRAAMALNMEIATESKFDRKNYFYPDNPKAYQISQFDQPIGENGYIDIEVDGETKRIGITRLHMEEDAGKSTHKGEYSLVDLNRQGTPLIEIVSEPDIRSPKEAYAYLEKLRSIIQYTGVSDVKMEEGSLRCDANISLRPYGQEKFGTKAELKNLNSFNYVRKGLEYEEKRQEEELLNGGEIGQETRRFDESTGKTILMRVKEGSDDYRYFPEPDIVPLYIDDAWKERVRQTIPELPDERKAKYVNELGLPAYDAHVLTLTKEMSDFFESTIEHGADVKLTSNWLMGGVNEYLNKNQVELLDTKLTPENLAGMIKLIEDGTMSSKIAKKVFPELAAKGGNAKQIMEDNGLVQISDEATLLKFVNEALDNNEQSVEDYKNGKGKAMGFLVGQIMKASKGQANPQLVNQLLKQELDKR</sequence>
<organism>
    <name type="scientific">Staphylococcus aureus (strain USA300)</name>
    <dbReference type="NCBI Taxonomy" id="367830"/>
    <lineage>
        <taxon>Bacteria</taxon>
        <taxon>Bacillati</taxon>
        <taxon>Bacillota</taxon>
        <taxon>Bacilli</taxon>
        <taxon>Bacillales</taxon>
        <taxon>Staphylococcaceae</taxon>
        <taxon>Staphylococcus</taxon>
    </lineage>
</organism>
<accession>Q2FFJ6</accession>